<dbReference type="EC" id="4.2.3.-" evidence="3"/>
<dbReference type="EMBL" id="AM237449">
    <property type="protein sequence ID" value="CAJ87067.1"/>
    <property type="molecule type" value="Genomic_DNA"/>
</dbReference>
<dbReference type="SMR" id="Q14RS2"/>
<dbReference type="GO" id="GO:0016829">
    <property type="term" value="F:lyase activity"/>
    <property type="evidence" value="ECO:0007669"/>
    <property type="project" value="UniProtKB-KW"/>
</dbReference>
<dbReference type="GO" id="GO:0009688">
    <property type="term" value="P:abscisic acid biosynthetic process"/>
    <property type="evidence" value="ECO:0000314"/>
    <property type="project" value="GO_Central"/>
</dbReference>
<feature type="chain" id="PRO_0000448432" description="Alpha-ionylideneethane synthase aba3">
    <location>
        <begin position="1"/>
        <end position="417"/>
    </location>
</feature>
<protein>
    <recommendedName>
        <fullName evidence="5">Alpha-ionylideneethane synthase aba3</fullName>
        <ecNumber evidence="3">4.2.3.-</ecNumber>
    </recommendedName>
    <alternativeName>
        <fullName evidence="5">Abscisic acid biosynthesis cluster protein 3</fullName>
    </alternativeName>
    <alternativeName>
        <fullName evidence="5">Sesquiterpene synthase aba3</fullName>
    </alternativeName>
</protein>
<name>ABA3_BOTFU</name>
<comment type="function">
    <text evidence="1 2 3 7">Alpha-ionylideneethane synthase; part of the gene cluster that mediates the biosynthesis of abscisic acid (ABA), a phytohormone that acts antagonistically toward salicylic acid (SA), jasmonic acid (JA) and ethylene (ETH) signaling, to impede plant defense responses (PubMed:15240257, PubMed:16820452). The first step of the pathway catalyzes the reaction from farnesyl diphosphate to alpha-ionylideneethane performed by the alpha-ionylideneethane synthase aba3 via a three-step reaction mechanism involving 2 neutral intermediates, beta-farnesene and allofarnesene (PubMed:30226766). The cytochrome P450 monooxygenase aba1 might then be involved in the conversion of alpha-ionylideneethane to alpha-ionylideneacetic acid (Probable). Alpha-ionylideneacetic acid is further converted to abscisic acid in 2 steps involving the cytochrome P450 monooxygenase aba2 and the short-chain dehydrogenase/reductase aba4, via the intermediates 1'-deoxy-ABA or 1',4'-trans-diol-ABA, depending on the order of action of these 2 enzymes (Probable). Aba2 is responsible for the hydroxylation of carbon atom C-1' and aba4 might be involved in the oxidation of the C-4' carbon atom (PubMed:16820452).</text>
</comment>
<comment type="pathway">
    <text evidence="3">Hormone biosynthesis.</text>
</comment>
<comment type="induction">
    <text evidence="2">Expression is enhanced at 60 and 90 minutes after the addition of the ABA precursor mevalonic acid (MVA) to the medium, but declined after 120 min.</text>
</comment>
<comment type="disruption phenotype">
    <text evidence="2">Impairs the production of abscisic acid (ABA).</text>
</comment>
<comment type="similarity">
    <text evidence="6">Belongs to the alpha-ionylideneethane synthase family.</text>
</comment>
<organism>
    <name type="scientific">Botryotinia fuckeliana</name>
    <name type="common">Noble rot fungus</name>
    <name type="synonym">Botrytis cinerea</name>
    <dbReference type="NCBI Taxonomy" id="40559"/>
    <lineage>
        <taxon>Eukaryota</taxon>
        <taxon>Fungi</taxon>
        <taxon>Dikarya</taxon>
        <taxon>Ascomycota</taxon>
        <taxon>Pezizomycotina</taxon>
        <taxon>Leotiomycetes</taxon>
        <taxon>Helotiales</taxon>
        <taxon>Sclerotiniaceae</taxon>
        <taxon>Botrytis</taxon>
    </lineage>
</organism>
<evidence type="ECO:0000269" key="1">
    <source>
    </source>
</evidence>
<evidence type="ECO:0000269" key="2">
    <source>
    </source>
</evidence>
<evidence type="ECO:0000269" key="3">
    <source>
    </source>
</evidence>
<evidence type="ECO:0000303" key="4">
    <source>
    </source>
</evidence>
<evidence type="ECO:0000303" key="5">
    <source>
    </source>
</evidence>
<evidence type="ECO:0000305" key="6"/>
<evidence type="ECO:0000305" key="7">
    <source>
    </source>
</evidence>
<gene>
    <name evidence="4" type="primary">aba3</name>
</gene>
<sequence>MQQVITQTLVDDRFIQISDSKKSEGLATDSTKRQSQEQPIHDKDPIKAATAAMATTPLVKEHQDTWYYPPDIANDLQSINLPAELKGEIFACAWEYTRCVIPNYTNWNRYVAFMRIIIMGIIAEFRGEMVDVTASNNLLGYDLDATLAALFEGTPGHKEMAREYKTFLLITADKASERRDGELFRRYVNALAQSPRHWFRMRDCDALARFTIASALACNDLDDIWFTEDQFEILTEIGDTLYDAVAFYKHRAEGETNSTFAYMPEDLRIKAYSECREILWALDAAWARNPKLANVINFVRFFGGPIHMMMRRYRFVEENLTIGKSETDKVVDQTRKNFKLWNRVDANKRSVLNTQRYKALIARSEELMFPGLAEFLEMGGDGICDKCKYRESTVQNCHTSLVVLNYAANADYRGEST</sequence>
<reference key="1">
    <citation type="journal article" date="2006" name="Appl. Environ. Microbiol.">
        <title>Identification of an abscisic acid gene cluster in the grey mold Botrytis cinerea.</title>
        <authorList>
            <person name="Siewers V."/>
            <person name="Kokkelink L."/>
            <person name="Smedsgaard J."/>
            <person name="Tudzynski P."/>
        </authorList>
    </citation>
    <scope>NUCLEOTIDE SEQUENCE [GENOMIC DNA]</scope>
    <scope>INDUCTION</scope>
    <scope>FUNCTION</scope>
    <scope>DISRUPTION PHENOTYPE</scope>
    <scope>PATHWAY</scope>
    <source>
        <strain>SAS56</strain>
    </source>
</reference>
<reference key="2">
    <citation type="journal article" date="2004" name="Appl. Environ. Microbiol.">
        <title>The P450 monooxygenase BcABA1 is essential for abscisic acid biosynthesis in Botrytis cinerea.</title>
        <authorList>
            <person name="Siewers V."/>
            <person name="Smedsgaard J."/>
            <person name="Tudzynski P."/>
        </authorList>
    </citation>
    <scope>FUNCTION</scope>
</reference>
<reference key="3">
    <citation type="journal article" date="2018" name="J. Am. Chem. Soc.">
        <title>Unveiling biosynthesis of the phytohormone abscisic acid in fungi: unprecedented mechanism of core scaffold formation catalyzed by an unusual sesquiterpene synthase.</title>
        <authorList>
            <person name="Takino J."/>
            <person name="Kozaki T."/>
            <person name="Sato Y."/>
            <person name="Liu C."/>
            <person name="Ozaki T."/>
            <person name="Minami A."/>
            <person name="Oikawa H."/>
        </authorList>
    </citation>
    <scope>FUNCTION</scope>
    <scope>CATALYTIC ACTIVITY</scope>
    <scope>PATHWAY</scope>
</reference>
<accession>Q14RS2</accession>
<proteinExistence type="evidence at protein level"/>
<keyword id="KW-0456">Lyase</keyword>
<keyword id="KW-0843">Virulence</keyword>